<protein>
    <recommendedName>
        <fullName evidence="2">Efflux pump aunC</fullName>
    </recommendedName>
    <alternativeName>
        <fullName evidence="2">Aurasperone B biosynthesis cluster protein C</fullName>
    </alternativeName>
</protein>
<sequence>MFAPSYDAVLSYTSIGGVQCPRLCYKLVLVTVGLCFCIFCTSLDNTIVATAVPRITQQFHSLDDVGWYASAYLLTTCAVTLPFGRLYTFFPIKWVYLSALFVFELGSFICGITPSSLGLILGRAVAGLGGGGLFSGSLLIITQCVPLRRRPAFSGFIMSIFAVASVIAPLMGGAFTDHISWRWCFYINLPFGLVSAVVIFFTFQTTKPVVQASLREKAAGLDPLGTATFLPAIVCLLLATQWGGAQYPWGDGRIIALFTLFGVLLACFVGLQLWARERATLPPRLLRGRNIWGSALYGFCLNGAMFTFVYYLPIWFQAVQGTSATESGIRNLPLVISNVIFAIISGVLVSATGYFGPFMLLSAAMASIAAGLLSMLHPSSGAGEWIGYQVLLGSSIGMGFQLPVFVVQTTLASTDIPTATALMTFIQLLGGAIFVSVAQNVFRNQLAADIRAALPMLDPKAVINAGPTSLRAMYSGETLTTLVAMYNDAVVHTFYLAIGLAAASFLAATVIQWRPSPKSISHPDSS</sequence>
<dbReference type="EMBL" id="ACJE01000004">
    <property type="protein sequence ID" value="EHA27205.1"/>
    <property type="molecule type" value="Genomic_DNA"/>
</dbReference>
<dbReference type="SMR" id="G3XSI4"/>
<dbReference type="HOGENOM" id="CLU_000960_22_1_1"/>
<dbReference type="OrthoDB" id="94322at5052"/>
<dbReference type="Proteomes" id="UP000009038">
    <property type="component" value="Unassembled WGS sequence"/>
</dbReference>
<dbReference type="GO" id="GO:0005886">
    <property type="term" value="C:plasma membrane"/>
    <property type="evidence" value="ECO:0007669"/>
    <property type="project" value="UniProtKB-SubCell"/>
</dbReference>
<dbReference type="GO" id="GO:0022857">
    <property type="term" value="F:transmembrane transporter activity"/>
    <property type="evidence" value="ECO:0007669"/>
    <property type="project" value="InterPro"/>
</dbReference>
<dbReference type="CDD" id="cd17502">
    <property type="entry name" value="MFS_Azr1_MDR_like"/>
    <property type="match status" value="1"/>
</dbReference>
<dbReference type="FunFam" id="1.20.1250.20:FF:000196">
    <property type="entry name" value="MFS toxin efflux pump (AflT)"/>
    <property type="match status" value="1"/>
</dbReference>
<dbReference type="FunFam" id="1.20.1720.10:FF:000012">
    <property type="entry name" value="MFS toxin efflux pump (AflT)"/>
    <property type="match status" value="1"/>
</dbReference>
<dbReference type="Gene3D" id="1.20.1250.20">
    <property type="entry name" value="MFS general substrate transporter like domains"/>
    <property type="match status" value="1"/>
</dbReference>
<dbReference type="Gene3D" id="1.20.1720.10">
    <property type="entry name" value="Multidrug resistance protein D"/>
    <property type="match status" value="1"/>
</dbReference>
<dbReference type="InterPro" id="IPR011701">
    <property type="entry name" value="MFS"/>
</dbReference>
<dbReference type="InterPro" id="IPR020846">
    <property type="entry name" value="MFS_dom"/>
</dbReference>
<dbReference type="InterPro" id="IPR036259">
    <property type="entry name" value="MFS_trans_sf"/>
</dbReference>
<dbReference type="InterPro" id="IPR005829">
    <property type="entry name" value="Sugar_transporter_CS"/>
</dbReference>
<dbReference type="PANTHER" id="PTHR23501">
    <property type="entry name" value="MAJOR FACILITATOR SUPERFAMILY"/>
    <property type="match status" value="1"/>
</dbReference>
<dbReference type="PANTHER" id="PTHR23501:SF199">
    <property type="entry name" value="MFS EFFLUX TRANSPORTER INPD-RELATED"/>
    <property type="match status" value="1"/>
</dbReference>
<dbReference type="Pfam" id="PF07690">
    <property type="entry name" value="MFS_1"/>
    <property type="match status" value="1"/>
</dbReference>
<dbReference type="SUPFAM" id="SSF103473">
    <property type="entry name" value="MFS general substrate transporter"/>
    <property type="match status" value="1"/>
</dbReference>
<dbReference type="PROSITE" id="PS50850">
    <property type="entry name" value="MFS"/>
    <property type="match status" value="1"/>
</dbReference>
<dbReference type="PROSITE" id="PS00217">
    <property type="entry name" value="SUGAR_TRANSPORT_2"/>
    <property type="match status" value="1"/>
</dbReference>
<comment type="function">
    <text evidence="4">Efflux pump; part of the gene cluster that mediates the biosynthesis of aurasperone B, a dimeric gamma-naphthopyrone.</text>
</comment>
<comment type="subcellular location">
    <subcellularLocation>
        <location evidence="3">Cell membrane</location>
        <topology evidence="1">Multi-pass membrane protein</topology>
    </subcellularLocation>
</comment>
<comment type="similarity">
    <text evidence="3">Belongs to the major facilitator superfamily. TCR/Tet family.</text>
</comment>
<accession>G3XSI4</accession>
<reference key="1">
    <citation type="journal article" date="2011" name="Genome Res.">
        <title>Comparative genomics of citric-acid-producing Aspergillus niger ATCC 1015 versus enzyme-producing CBS 513.88.</title>
        <authorList>
            <person name="Andersen M.R."/>
            <person name="Salazar M.P."/>
            <person name="Schaap P.J."/>
            <person name="van de Vondervoort P.J.I."/>
            <person name="Culley D."/>
            <person name="Thykaer J."/>
            <person name="Frisvad J.C."/>
            <person name="Nielsen K.F."/>
            <person name="Albang R."/>
            <person name="Albermann K."/>
            <person name="Berka R.M."/>
            <person name="Braus G.H."/>
            <person name="Braus-Stromeyer S.A."/>
            <person name="Corrochano L.M."/>
            <person name="Dai Z."/>
            <person name="van Dijck P.W.M."/>
            <person name="Hofmann G."/>
            <person name="Lasure L.L."/>
            <person name="Magnuson J.K."/>
            <person name="Menke H."/>
            <person name="Meijer M."/>
            <person name="Meijer S.L."/>
            <person name="Nielsen J.B."/>
            <person name="Nielsen M.L."/>
            <person name="van Ooyen A.J.J."/>
            <person name="Pel H.J."/>
            <person name="Poulsen L."/>
            <person name="Samson R.A."/>
            <person name="Stam H."/>
            <person name="Tsang A."/>
            <person name="van den Brink J.M."/>
            <person name="Atkins A."/>
            <person name="Aerts A."/>
            <person name="Shapiro H."/>
            <person name="Pangilinan J."/>
            <person name="Salamov A."/>
            <person name="Lou Y."/>
            <person name="Lindquist E."/>
            <person name="Lucas S."/>
            <person name="Grimwood J."/>
            <person name="Grigoriev I.V."/>
            <person name="Kubicek C.P."/>
            <person name="Martinez D."/>
            <person name="van Peij N.N.M.E."/>
            <person name="Roubos J.A."/>
            <person name="Nielsen J."/>
            <person name="Baker S.E."/>
        </authorList>
    </citation>
    <scope>NUCLEOTIDE SEQUENCE [LARGE SCALE GENOMIC DNA]</scope>
    <source>
        <strain>ATCC 1015 / CBS 113.46 / FGSC A1144 / LSHB Ac4 / NCTC 3858a / NRRL 328 / USDA 3528.7</strain>
    </source>
</reference>
<reference key="2">
    <citation type="journal article" date="2019" name="Biochemistry">
        <title>Biaryl-forming enzymes from Aspergilli exhibit substrate-dependent stereoselectivity.</title>
        <authorList>
            <person name="Obermaier S."/>
            <person name="Mueller M."/>
        </authorList>
    </citation>
    <scope>FUNCTION</scope>
</reference>
<evidence type="ECO:0000255" key="1"/>
<evidence type="ECO:0000303" key="2">
    <source>
    </source>
</evidence>
<evidence type="ECO:0000305" key="3"/>
<evidence type="ECO:0000305" key="4">
    <source>
    </source>
</evidence>
<organism>
    <name type="scientific">Aspergillus niger (strain ATCC 1015 / CBS 113.46 / FGSC A1144 / LSHB Ac4 / NCTC 3858a / NRRL 328 / USDA 3528.7)</name>
    <dbReference type="NCBI Taxonomy" id="380704"/>
    <lineage>
        <taxon>Eukaryota</taxon>
        <taxon>Fungi</taxon>
        <taxon>Dikarya</taxon>
        <taxon>Ascomycota</taxon>
        <taxon>Pezizomycotina</taxon>
        <taxon>Eurotiomycetes</taxon>
        <taxon>Eurotiomycetidae</taxon>
        <taxon>Eurotiales</taxon>
        <taxon>Aspergillaceae</taxon>
        <taxon>Aspergillus</taxon>
        <taxon>Aspergillus subgen. Circumdati</taxon>
    </lineage>
</organism>
<gene>
    <name evidence="2" type="primary">aunc</name>
    <name type="ORF">ASPNIDRAFT_46243</name>
</gene>
<name>AUNC_ASPNA</name>
<feature type="chain" id="PRO_0000449887" description="Efflux pump aunC">
    <location>
        <begin position="1"/>
        <end position="526"/>
    </location>
</feature>
<feature type="transmembrane region" description="Helical" evidence="1">
    <location>
        <begin position="23"/>
        <end position="43"/>
    </location>
</feature>
<feature type="transmembrane region" description="Helical" evidence="1">
    <location>
        <begin position="64"/>
        <end position="84"/>
    </location>
</feature>
<feature type="transmembrane region" description="Helical" evidence="1">
    <location>
        <begin position="89"/>
        <end position="109"/>
    </location>
</feature>
<feature type="transmembrane region" description="Helical" evidence="1">
    <location>
        <begin position="125"/>
        <end position="145"/>
    </location>
</feature>
<feature type="transmembrane region" description="Helical" evidence="1">
    <location>
        <begin position="155"/>
        <end position="175"/>
    </location>
</feature>
<feature type="transmembrane region" description="Helical" evidence="1">
    <location>
        <begin position="183"/>
        <end position="203"/>
    </location>
</feature>
<feature type="transmembrane region" description="Helical" evidence="1">
    <location>
        <begin position="218"/>
        <end position="238"/>
    </location>
</feature>
<feature type="transmembrane region" description="Helical" evidence="1">
    <location>
        <begin position="254"/>
        <end position="274"/>
    </location>
</feature>
<feature type="transmembrane region" description="Helical" evidence="1">
    <location>
        <begin position="296"/>
        <end position="316"/>
    </location>
</feature>
<feature type="transmembrane region" description="Helical" evidence="1">
    <location>
        <begin position="339"/>
        <end position="359"/>
    </location>
</feature>
<feature type="transmembrane region" description="Helical" evidence="1">
    <location>
        <begin position="360"/>
        <end position="380"/>
    </location>
</feature>
<feature type="transmembrane region" description="Helical" evidence="1">
    <location>
        <begin position="386"/>
        <end position="406"/>
    </location>
</feature>
<feature type="transmembrane region" description="Helical" evidence="1">
    <location>
        <begin position="418"/>
        <end position="438"/>
    </location>
</feature>
<feature type="transmembrane region" description="Helical" evidence="1">
    <location>
        <begin position="491"/>
        <end position="511"/>
    </location>
</feature>
<keyword id="KW-1003">Cell membrane</keyword>
<keyword id="KW-0472">Membrane</keyword>
<keyword id="KW-0812">Transmembrane</keyword>
<keyword id="KW-1133">Transmembrane helix</keyword>
<keyword id="KW-0813">Transport</keyword>
<proteinExistence type="inferred from homology"/>